<dbReference type="EC" id="2.1.1.-"/>
<dbReference type="EMBL" id="L14063">
    <property type="protein sequence ID" value="AAA18532.1"/>
    <property type="molecule type" value="mRNA"/>
</dbReference>
<dbReference type="PIR" id="JQ2268">
    <property type="entry name" value="JQ2268"/>
</dbReference>
<dbReference type="RefSeq" id="NP_001105689.1">
    <property type="nucleotide sequence ID" value="NM_001112219.1"/>
</dbReference>
<dbReference type="SMR" id="P47917"/>
<dbReference type="STRING" id="4577.P47917"/>
<dbReference type="PaxDb" id="4577-GRMZM2G017557_P01"/>
<dbReference type="GeneID" id="542706"/>
<dbReference type="KEGG" id="zma:542706"/>
<dbReference type="MaizeGDB" id="65328"/>
<dbReference type="eggNOG" id="KOG3178">
    <property type="taxonomic scope" value="Eukaryota"/>
</dbReference>
<dbReference type="InParanoid" id="P47917"/>
<dbReference type="OrthoDB" id="757282at2759"/>
<dbReference type="Proteomes" id="UP000007305">
    <property type="component" value="Unplaced"/>
</dbReference>
<dbReference type="ExpressionAtlas" id="P47917">
    <property type="expression patterns" value="baseline and differential"/>
</dbReference>
<dbReference type="GO" id="GO:0008171">
    <property type="term" value="F:O-methyltransferase activity"/>
    <property type="evidence" value="ECO:0000318"/>
    <property type="project" value="GO_Central"/>
</dbReference>
<dbReference type="GO" id="GO:0046983">
    <property type="term" value="F:protein dimerization activity"/>
    <property type="evidence" value="ECO:0007669"/>
    <property type="project" value="InterPro"/>
</dbReference>
<dbReference type="GO" id="GO:0008757">
    <property type="term" value="F:S-adenosylmethionine-dependent methyltransferase activity"/>
    <property type="evidence" value="ECO:0000318"/>
    <property type="project" value="GO_Central"/>
</dbReference>
<dbReference type="GO" id="GO:0009058">
    <property type="term" value="P:biosynthetic process"/>
    <property type="evidence" value="ECO:0000318"/>
    <property type="project" value="GO_Central"/>
</dbReference>
<dbReference type="GO" id="GO:0032259">
    <property type="term" value="P:methylation"/>
    <property type="evidence" value="ECO:0000318"/>
    <property type="project" value="GO_Central"/>
</dbReference>
<dbReference type="FunFam" id="1.10.10.10:FF:000292">
    <property type="entry name" value="O-methyltransferase ZRP4"/>
    <property type="match status" value="1"/>
</dbReference>
<dbReference type="FunFam" id="3.40.50.150:FF:000057">
    <property type="entry name" value="O-methyltransferase ZRP4"/>
    <property type="match status" value="1"/>
</dbReference>
<dbReference type="Gene3D" id="3.40.50.150">
    <property type="entry name" value="Vaccinia Virus protein VP39"/>
    <property type="match status" value="1"/>
</dbReference>
<dbReference type="Gene3D" id="1.10.10.10">
    <property type="entry name" value="Winged helix-like DNA-binding domain superfamily/Winged helix DNA-binding domain"/>
    <property type="match status" value="1"/>
</dbReference>
<dbReference type="InterPro" id="IPR016461">
    <property type="entry name" value="COMT-like"/>
</dbReference>
<dbReference type="InterPro" id="IPR001077">
    <property type="entry name" value="O_MeTrfase_dom"/>
</dbReference>
<dbReference type="InterPro" id="IPR012967">
    <property type="entry name" value="Plant_O-MeTrfase_dimerisation"/>
</dbReference>
<dbReference type="InterPro" id="IPR029063">
    <property type="entry name" value="SAM-dependent_MTases_sf"/>
</dbReference>
<dbReference type="InterPro" id="IPR036388">
    <property type="entry name" value="WH-like_DNA-bd_sf"/>
</dbReference>
<dbReference type="InterPro" id="IPR036390">
    <property type="entry name" value="WH_DNA-bd_sf"/>
</dbReference>
<dbReference type="PANTHER" id="PTHR11746">
    <property type="entry name" value="O-METHYLTRANSFERASE"/>
    <property type="match status" value="1"/>
</dbReference>
<dbReference type="Pfam" id="PF08100">
    <property type="entry name" value="Dimerisation"/>
    <property type="match status" value="1"/>
</dbReference>
<dbReference type="Pfam" id="PF00891">
    <property type="entry name" value="Methyltransf_2"/>
    <property type="match status" value="1"/>
</dbReference>
<dbReference type="PIRSF" id="PIRSF005739">
    <property type="entry name" value="O-mtase"/>
    <property type="match status" value="1"/>
</dbReference>
<dbReference type="SUPFAM" id="SSF53335">
    <property type="entry name" value="S-adenosyl-L-methionine-dependent methyltransferases"/>
    <property type="match status" value="1"/>
</dbReference>
<dbReference type="SUPFAM" id="SSF46785">
    <property type="entry name" value="Winged helix' DNA-binding domain"/>
    <property type="match status" value="1"/>
</dbReference>
<dbReference type="PROSITE" id="PS51683">
    <property type="entry name" value="SAM_OMT_II"/>
    <property type="match status" value="1"/>
</dbReference>
<proteinExistence type="evidence at transcript level"/>
<name>ZRP4_MAIZE</name>
<gene>
    <name type="primary">ZRP4</name>
</gene>
<protein>
    <recommendedName>
        <fullName>O-methyltransferase ZRP4</fullName>
        <shortName>OMT</shortName>
        <ecNumber>2.1.1.-</ecNumber>
    </recommendedName>
</protein>
<comment type="function">
    <text>May be involved in the O-methylation of suberin phenylpropanoid precursors.</text>
</comment>
<comment type="subunit">
    <text evidence="1">Homodimer.</text>
</comment>
<comment type="tissue specificity">
    <text>Accumulates preferentially in the roots and is located predominantly in the region of the endodermis, low levels are seen in the leaves, stems and other shoot organs.</text>
</comment>
<comment type="similarity">
    <text evidence="2">Belongs to the class I-like SAM-binding methyltransferase superfamily. Cation-independent O-methyltransferase family. COMT subfamily.</text>
</comment>
<organism>
    <name type="scientific">Zea mays</name>
    <name type="common">Maize</name>
    <dbReference type="NCBI Taxonomy" id="4577"/>
    <lineage>
        <taxon>Eukaryota</taxon>
        <taxon>Viridiplantae</taxon>
        <taxon>Streptophyta</taxon>
        <taxon>Embryophyta</taxon>
        <taxon>Tracheophyta</taxon>
        <taxon>Spermatophyta</taxon>
        <taxon>Magnoliopsida</taxon>
        <taxon>Liliopsida</taxon>
        <taxon>Poales</taxon>
        <taxon>Poaceae</taxon>
        <taxon>PACMAD clade</taxon>
        <taxon>Panicoideae</taxon>
        <taxon>Andropogonodae</taxon>
        <taxon>Andropogoneae</taxon>
        <taxon>Tripsacinae</taxon>
        <taxon>Zea</taxon>
    </lineage>
</organism>
<reference key="1">
    <citation type="journal article" date="1993" name="Plant Physiol.">
        <title>An mRNA putatively coding for an O-methyltransferase accumulates preferentially in maize roots and is located predominantly in the region of the endodermis.</title>
        <authorList>
            <person name="Held B.M."/>
            <person name="Wang H."/>
            <person name="John I."/>
            <person name="Wurtele E.S."/>
            <person name="Colbert J.T."/>
        </authorList>
    </citation>
    <scope>NUCLEOTIDE SEQUENCE [MRNA]</scope>
    <source>
        <strain>cv. NKH31</strain>
        <tissue>Root</tissue>
    </source>
</reference>
<sequence>MELSPNNSTDQSLLDAQLELWHTTFAFMKSMALKSAIHLRIADAIHLHGGAASLSQILSKVHLHPSRVSSLRRLMRVLTTTNVFGTQPLGGGSDDDSEPVYTLTPVSRLLIGSQSSQLAQTPLAAMVLDPTIVSPFSELGAWFQHELPDPCIFKHTHGRGIWELTKDDATFDALVNDGLASDSQLIVDVAIKQSAEVFQGISSLVDVGGGIGAAAQAISKAFPHVKCSVLDLAHVVAKAPTHTDVQFIAGDMFESIPPADAVLLKSVLHDWDHDDCVKILKNCKKAIPPREAGGKVIIINMVVGAGPSDMKHKEMQAIFDVYIMFINGMERDEQEWSKIFSEAGYSDYRIIPVLGVRSIIEVYP</sequence>
<evidence type="ECO:0000250" key="1"/>
<evidence type="ECO:0000255" key="2">
    <source>
        <dbReference type="PROSITE-ProRule" id="PRU01020"/>
    </source>
</evidence>
<keyword id="KW-0489">Methyltransferase</keyword>
<keyword id="KW-1185">Reference proteome</keyword>
<keyword id="KW-0949">S-adenosyl-L-methionine</keyword>
<keyword id="KW-0808">Transferase</keyword>
<feature type="chain" id="PRO_0000204440" description="O-methyltransferase ZRP4">
    <location>
        <begin position="1"/>
        <end position="364"/>
    </location>
</feature>
<feature type="active site" description="Proton acceptor" evidence="2">
    <location>
        <position position="269"/>
    </location>
</feature>
<feature type="binding site" evidence="2">
    <location>
        <position position="208"/>
    </location>
    <ligand>
        <name>S-adenosyl-L-methionine</name>
        <dbReference type="ChEBI" id="CHEBI:59789"/>
    </ligand>
</feature>
<feature type="binding site" evidence="2">
    <location>
        <position position="231"/>
    </location>
    <ligand>
        <name>S-adenosyl-L-methionine</name>
        <dbReference type="ChEBI" id="CHEBI:59789"/>
    </ligand>
</feature>
<feature type="binding site" evidence="2">
    <location>
        <position position="251"/>
    </location>
    <ligand>
        <name>S-adenosyl-L-methionine</name>
        <dbReference type="ChEBI" id="CHEBI:59789"/>
    </ligand>
</feature>
<feature type="binding site" evidence="2">
    <location>
        <position position="252"/>
    </location>
    <ligand>
        <name>S-adenosyl-L-methionine</name>
        <dbReference type="ChEBI" id="CHEBI:59789"/>
    </ligand>
</feature>
<feature type="binding site" evidence="2">
    <location>
        <position position="265"/>
    </location>
    <ligand>
        <name>S-adenosyl-L-methionine</name>
        <dbReference type="ChEBI" id="CHEBI:59789"/>
    </ligand>
</feature>
<accession>P47917</accession>